<gene>
    <name evidence="7" type="primary">UKL2</name>
    <name evidence="8" type="synonym">UCK2</name>
    <name evidence="10" type="ordered locus">At3g27190</name>
    <name evidence="11" type="ORF">K17E12.1</name>
</gene>
<reference key="1">
    <citation type="journal article" date="2000" name="DNA Res.">
        <title>Structural analysis of Arabidopsis thaliana chromosome 3. II. Sequence features of the 4,251,695 bp regions covered by 90 P1, TAC and BAC clones.</title>
        <authorList>
            <person name="Kaneko T."/>
            <person name="Katoh T."/>
            <person name="Sato S."/>
            <person name="Nakamura Y."/>
            <person name="Asamizu E."/>
            <person name="Tabata S."/>
        </authorList>
    </citation>
    <scope>NUCLEOTIDE SEQUENCE [LARGE SCALE GENOMIC DNA]</scope>
    <source>
        <strain>cv. Columbia</strain>
    </source>
</reference>
<reference key="2">
    <citation type="journal article" date="2017" name="Plant J.">
        <title>Araport11: a complete reannotation of the Arabidopsis thaliana reference genome.</title>
        <authorList>
            <person name="Cheng C.Y."/>
            <person name="Krishnakumar V."/>
            <person name="Chan A.P."/>
            <person name="Thibaud-Nissen F."/>
            <person name="Schobel S."/>
            <person name="Town C.D."/>
        </authorList>
    </citation>
    <scope>GENOME REANNOTATION</scope>
    <source>
        <strain>cv. Columbia</strain>
    </source>
</reference>
<reference key="3">
    <citation type="submission" date="2003-11" db="EMBL/GenBank/DDBJ databases">
        <title>Arabidopsis cDNA clones.</title>
        <authorList>
            <person name="Cheuk R."/>
            <person name="Chen H."/>
            <person name="Kim C.J."/>
            <person name="Shinn P."/>
            <person name="Carninci P."/>
            <person name="Hayashizaki Y."/>
            <person name="Ishida J."/>
            <person name="Kamiya A."/>
            <person name="Kawai J."/>
            <person name="Narusaka M."/>
            <person name="Sakurai T."/>
            <person name="Satou M."/>
            <person name="Seki M."/>
            <person name="Shinozaki K."/>
            <person name="Ecker J.R."/>
        </authorList>
    </citation>
    <scope>NUCLEOTIDE SEQUENCE [LARGE SCALE MRNA]</scope>
</reference>
<reference key="4">
    <citation type="submission" date="2004-09" db="EMBL/GenBank/DDBJ databases">
        <title>Large-scale analysis of RIKEN Arabidopsis full-length (RAFL) cDNAs.</title>
        <authorList>
            <person name="Totoki Y."/>
            <person name="Seki M."/>
            <person name="Ishida J."/>
            <person name="Nakajima M."/>
            <person name="Enju A."/>
            <person name="Kamiya A."/>
            <person name="Narusaka M."/>
            <person name="Shin-i T."/>
            <person name="Nakagawa M."/>
            <person name="Sakamoto N."/>
            <person name="Oishi K."/>
            <person name="Kohara Y."/>
            <person name="Kobayashi M."/>
            <person name="Toyoda A."/>
            <person name="Sakaki Y."/>
            <person name="Sakurai T."/>
            <person name="Iida K."/>
            <person name="Akiyama K."/>
            <person name="Satou M."/>
            <person name="Toyoda T."/>
            <person name="Konagaya A."/>
            <person name="Carninci P."/>
            <person name="Kawai J."/>
            <person name="Hayashizaki Y."/>
            <person name="Shinozaki K."/>
        </authorList>
    </citation>
    <scope>NUCLEOTIDE SEQUENCE [LARGE SCALE MRNA]</scope>
    <source>
        <strain>cv. Columbia</strain>
    </source>
</reference>
<reference key="5">
    <citation type="journal article" date="2009" name="Plant J.">
        <title>Uracil salvage is necessary for early Arabidopsis development.</title>
        <authorList>
            <person name="Mainguet S.E."/>
            <person name="Gakiere B."/>
            <person name="Majira A."/>
            <person name="Pelletier S."/>
            <person name="Bringel F."/>
            <person name="Guerard F."/>
            <person name="Caboche M."/>
            <person name="Berthome R."/>
            <person name="Renou J.P."/>
        </authorList>
    </citation>
    <scope>FUNCTION</scope>
    <scope>DISRUPTION PHENOTYPE</scope>
    <scope>GENE FAMILY</scope>
    <scope>NOMENCLATURE</scope>
</reference>
<reference key="6">
    <citation type="journal article" date="2011" name="Plant Cell">
        <title>Plastid uridine salvage activity is required for photoassimilate allocation and partitioning in Arabidopsis.</title>
        <authorList>
            <person name="Chen M."/>
            <person name="Thelen J.J."/>
        </authorList>
    </citation>
    <scope>FUNCTION</scope>
    <scope>CATALYTIC ACTIVITY</scope>
    <scope>BIOPHYSICOCHEMICAL PROPERTIES</scope>
    <scope>SUBCELLULAR LOCATION</scope>
    <scope>DISRUPTION PHENOTYPE</scope>
</reference>
<reference key="7">
    <citation type="journal article" date="2019" name="Plant Physiol.">
        <title>Pyrimidine salvage: physiological functions and interaction with chloroplast biogenesis.</title>
        <authorList>
            <person name="Ohler L."/>
            <person name="Niopek-Witz S."/>
            <person name="Mainguet S.E."/>
            <person name="Moehlmann T."/>
        </authorList>
    </citation>
    <scope>FUNCTION</scope>
    <scope>CATALYTIC ACTIVITY</scope>
    <scope>BIOPHYSICOCHEMICAL PROPERTIES</scope>
</reference>
<reference key="8">
    <citation type="journal article" date="2020" name="Plant Cell">
        <title>A kinase and a glycosylase catabolize pseudouridine in the peroxisome to prevent toxic pseudouridine monophosphate accumulation.</title>
        <authorList>
            <person name="Chen M."/>
            <person name="Witte C.P."/>
        </authorList>
    </citation>
    <scope>FUNCTION</scope>
    <scope>CATALYTIC ACTIVITY</scope>
</reference>
<protein>
    <recommendedName>
        <fullName evidence="9">Uridine/cytidine kinase UKL1, chloroplastic</fullName>
        <ecNumber evidence="4 5 6">2.7.1.48</ecNumber>
    </recommendedName>
    <alternativeName>
        <fullName evidence="7">Uridine kinase-like protein 2</fullName>
    </alternativeName>
    <alternativeName>
        <fullName evidence="8">Uridine/cytidine kinase 2</fullName>
    </alternativeName>
</protein>
<proteinExistence type="evidence at protein level"/>
<organism>
    <name type="scientific">Arabidopsis thaliana</name>
    <name type="common">Mouse-ear cress</name>
    <dbReference type="NCBI Taxonomy" id="3702"/>
    <lineage>
        <taxon>Eukaryota</taxon>
        <taxon>Viridiplantae</taxon>
        <taxon>Streptophyta</taxon>
        <taxon>Embryophyta</taxon>
        <taxon>Tracheophyta</taxon>
        <taxon>Spermatophyta</taxon>
        <taxon>Magnoliopsida</taxon>
        <taxon>eudicotyledons</taxon>
        <taxon>Gunneridae</taxon>
        <taxon>Pentapetalae</taxon>
        <taxon>rosids</taxon>
        <taxon>malvids</taxon>
        <taxon>Brassicales</taxon>
        <taxon>Brassicaceae</taxon>
        <taxon>Camelineae</taxon>
        <taxon>Arabidopsis</taxon>
    </lineage>
</organism>
<dbReference type="EC" id="2.7.1.48" evidence="4 5 6"/>
<dbReference type="EMBL" id="AP000381">
    <property type="protein sequence ID" value="BAB02114.1"/>
    <property type="molecule type" value="Genomic_DNA"/>
</dbReference>
<dbReference type="EMBL" id="CP002686">
    <property type="protein sequence ID" value="AEE77277.1"/>
    <property type="molecule type" value="Genomic_DNA"/>
</dbReference>
<dbReference type="EMBL" id="BT010743">
    <property type="protein sequence ID" value="AAR23713.1"/>
    <property type="molecule type" value="mRNA"/>
</dbReference>
<dbReference type="EMBL" id="AK175542">
    <property type="protein sequence ID" value="BAD43305.1"/>
    <property type="molecule type" value="mRNA"/>
</dbReference>
<dbReference type="RefSeq" id="NP_189355.1">
    <property type="nucleotide sequence ID" value="NM_113633.6"/>
</dbReference>
<dbReference type="SMR" id="Q9LK34"/>
<dbReference type="BioGRID" id="7668">
    <property type="interactions" value="3"/>
</dbReference>
<dbReference type="FunCoup" id="Q9LK34">
    <property type="interactions" value="3717"/>
</dbReference>
<dbReference type="STRING" id="3702.Q9LK34"/>
<dbReference type="iPTMnet" id="Q9LK34"/>
<dbReference type="PaxDb" id="3702-AT3G27190.1"/>
<dbReference type="ProteomicsDB" id="245304"/>
<dbReference type="EnsemblPlants" id="AT3G27190.1">
    <property type="protein sequence ID" value="AT3G27190.1"/>
    <property type="gene ID" value="AT3G27190"/>
</dbReference>
<dbReference type="GeneID" id="822338"/>
<dbReference type="Gramene" id="AT3G27190.1">
    <property type="protein sequence ID" value="AT3G27190.1"/>
    <property type="gene ID" value="AT3G27190"/>
</dbReference>
<dbReference type="KEGG" id="ath:AT3G27190"/>
<dbReference type="Araport" id="AT3G27190"/>
<dbReference type="TAIR" id="AT3G27190">
    <property type="gene designation" value="UKL2"/>
</dbReference>
<dbReference type="eggNOG" id="KOG4203">
    <property type="taxonomic scope" value="Eukaryota"/>
</dbReference>
<dbReference type="HOGENOM" id="CLU_021278_0_3_1"/>
<dbReference type="InParanoid" id="Q9LK34"/>
<dbReference type="OMA" id="DQCLNEE"/>
<dbReference type="OrthoDB" id="106623at2759"/>
<dbReference type="PhylomeDB" id="Q9LK34"/>
<dbReference type="BioCyc" id="ARA:AT3G27190-MONOMER"/>
<dbReference type="SABIO-RK" id="Q9LK34"/>
<dbReference type="UniPathway" id="UPA00574">
    <property type="reaction ID" value="UER00637"/>
</dbReference>
<dbReference type="UniPathway" id="UPA00579">
    <property type="reaction ID" value="UER00640"/>
</dbReference>
<dbReference type="PRO" id="PR:Q9LK34"/>
<dbReference type="Proteomes" id="UP000006548">
    <property type="component" value="Chromosome 3"/>
</dbReference>
<dbReference type="ExpressionAtlas" id="Q9LK34">
    <property type="expression patterns" value="baseline and differential"/>
</dbReference>
<dbReference type="GO" id="GO:0009507">
    <property type="term" value="C:chloroplast"/>
    <property type="evidence" value="ECO:0000314"/>
    <property type="project" value="TAIR"/>
</dbReference>
<dbReference type="GO" id="GO:0005524">
    <property type="term" value="F:ATP binding"/>
    <property type="evidence" value="ECO:0007669"/>
    <property type="project" value="InterPro"/>
</dbReference>
<dbReference type="GO" id="GO:0043771">
    <property type="term" value="F:cytidine kinase activity"/>
    <property type="evidence" value="ECO:0007669"/>
    <property type="project" value="RHEA"/>
</dbReference>
<dbReference type="GO" id="GO:0016757">
    <property type="term" value="F:glycosyltransferase activity"/>
    <property type="evidence" value="ECO:0007669"/>
    <property type="project" value="UniProtKB-KW"/>
</dbReference>
<dbReference type="GO" id="GO:0005525">
    <property type="term" value="F:GTP binding"/>
    <property type="evidence" value="ECO:0007669"/>
    <property type="project" value="UniProtKB-KW"/>
</dbReference>
<dbReference type="GO" id="GO:0004849">
    <property type="term" value="F:uridine kinase activity"/>
    <property type="evidence" value="ECO:0000314"/>
    <property type="project" value="TAIR"/>
</dbReference>
<dbReference type="GO" id="GO:0006207">
    <property type="term" value="P:'de novo' pyrimidine nucleobase biosynthetic process"/>
    <property type="evidence" value="ECO:0000315"/>
    <property type="project" value="TAIR"/>
</dbReference>
<dbReference type="GO" id="GO:0044211">
    <property type="term" value="P:CTP salvage"/>
    <property type="evidence" value="ECO:0007669"/>
    <property type="project" value="UniProtKB-UniPathway"/>
</dbReference>
<dbReference type="GO" id="GO:2001006">
    <property type="term" value="P:regulation of cellulose biosynthetic process"/>
    <property type="evidence" value="ECO:0000315"/>
    <property type="project" value="TAIR"/>
</dbReference>
<dbReference type="GO" id="GO:1901141">
    <property type="term" value="P:regulation of lignin biosynthetic process"/>
    <property type="evidence" value="ECO:0000315"/>
    <property type="project" value="TAIR"/>
</dbReference>
<dbReference type="GO" id="GO:2000904">
    <property type="term" value="P:regulation of starch metabolic process"/>
    <property type="evidence" value="ECO:0000315"/>
    <property type="project" value="TAIR"/>
</dbReference>
<dbReference type="GO" id="GO:0044206">
    <property type="term" value="P:UMP salvage"/>
    <property type="evidence" value="ECO:0000314"/>
    <property type="project" value="TAIR"/>
</dbReference>
<dbReference type="CDD" id="cd06223">
    <property type="entry name" value="PRTases_typeI"/>
    <property type="match status" value="1"/>
</dbReference>
<dbReference type="CDD" id="cd02023">
    <property type="entry name" value="UMPK"/>
    <property type="match status" value="1"/>
</dbReference>
<dbReference type="FunFam" id="3.40.50.2020:FF:000015">
    <property type="entry name" value="Uridine kinase"/>
    <property type="match status" value="1"/>
</dbReference>
<dbReference type="FunFam" id="3.40.50.300:FF:000339">
    <property type="entry name" value="Uridine kinase"/>
    <property type="match status" value="1"/>
</dbReference>
<dbReference type="Gene3D" id="3.40.50.2020">
    <property type="match status" value="1"/>
</dbReference>
<dbReference type="Gene3D" id="3.40.50.300">
    <property type="entry name" value="P-loop containing nucleotide triphosphate hydrolases"/>
    <property type="match status" value="1"/>
</dbReference>
<dbReference type="InterPro" id="IPR027417">
    <property type="entry name" value="P-loop_NTPase"/>
</dbReference>
<dbReference type="InterPro" id="IPR000836">
    <property type="entry name" value="PRibTrfase_dom"/>
</dbReference>
<dbReference type="InterPro" id="IPR006083">
    <property type="entry name" value="PRK/URK"/>
</dbReference>
<dbReference type="InterPro" id="IPR029057">
    <property type="entry name" value="PRTase-like"/>
</dbReference>
<dbReference type="InterPro" id="IPR000764">
    <property type="entry name" value="Uridine_kinase-like"/>
</dbReference>
<dbReference type="NCBIfam" id="NF001097">
    <property type="entry name" value="PRK00129.1"/>
    <property type="match status" value="1"/>
</dbReference>
<dbReference type="NCBIfam" id="NF004018">
    <property type="entry name" value="PRK05480.1"/>
    <property type="match status" value="1"/>
</dbReference>
<dbReference type="NCBIfam" id="TIGR00235">
    <property type="entry name" value="udk"/>
    <property type="match status" value="1"/>
</dbReference>
<dbReference type="PANTHER" id="PTHR10285">
    <property type="entry name" value="URIDINE KINASE"/>
    <property type="match status" value="1"/>
</dbReference>
<dbReference type="Pfam" id="PF00485">
    <property type="entry name" value="PRK"/>
    <property type="match status" value="1"/>
</dbReference>
<dbReference type="Pfam" id="PF14681">
    <property type="entry name" value="UPRTase"/>
    <property type="match status" value="1"/>
</dbReference>
<dbReference type="PRINTS" id="PR00988">
    <property type="entry name" value="URIDINKINASE"/>
</dbReference>
<dbReference type="SUPFAM" id="SSF52540">
    <property type="entry name" value="P-loop containing nucleoside triphosphate hydrolases"/>
    <property type="match status" value="1"/>
</dbReference>
<dbReference type="SUPFAM" id="SSF53271">
    <property type="entry name" value="PRTase-like"/>
    <property type="match status" value="1"/>
</dbReference>
<sequence length="483" mass="54210">MPEDSTAIDYVMEKASGPHFSGLRLDGLLSSPSKSSVSSPSHFRLSNSSFSATDDPAAPHQPFVIGVTGGTASGKTTVCDMIIQQLHDHRIVLVNQDSFYRGLTSEELEHVQEYNFDHPDAFDTEQLLHCVDILKSGQPYQIPIYDFKTHQRKVDAFRQVNACDVIILEGILVFHDSRVRDLMNMKIFVDTDADVRLARRIRRDTVERGRDVDSVLEQYAKFVKPAFDDFVLPSKKYADVIIPRGGDNHVAVDLIVQHIHTKLGQHDLCKIYPNVFVIETTFQIRGMHTLIREKDISKHDFVFYSDRLIRLVVEHGLGHLPFTEKQVVTPTGSVYSGVDFCKKLCGVSVIRSGESMENALRACCKGIKIGKILIHRDGDNGMQLIYEKLPSDISERHVLLLDPVLGTGNSANQAIELLIQKGVPEAHIIFLNLISAPEGIHCVCKRFPKLKIVTSEIDQCLNEEFRVIPGLGEFGDRYFGTDE</sequence>
<accession>Q9LK34</accession>
<name>UKL2_ARATH</name>
<feature type="transit peptide" description="Chloroplast" evidence="2">
    <location>
        <begin position="1"/>
        <end position="47"/>
    </location>
</feature>
<feature type="chain" id="PRO_0000394515" description="Uridine/cytidine kinase UKL1, chloroplastic">
    <location>
        <begin position="48"/>
        <end position="483"/>
    </location>
</feature>
<feature type="region of interest" description="Uridine kinase" evidence="1">
    <location>
        <begin position="59"/>
        <end position="264"/>
    </location>
</feature>
<feature type="region of interest" description="Uracil phosphoribosyltransferase" evidence="1">
    <location>
        <begin position="274"/>
        <end position="483"/>
    </location>
</feature>
<feature type="binding site" evidence="1">
    <location>
        <position position="298"/>
    </location>
    <ligand>
        <name>GTP</name>
        <dbReference type="ChEBI" id="CHEBI:37565"/>
    </ligand>
</feature>
<feature type="binding site" evidence="1">
    <location>
        <position position="307"/>
    </location>
    <ligand>
        <name>GTP</name>
        <dbReference type="ChEBI" id="CHEBI:37565"/>
    </ligand>
</feature>
<feature type="binding site" evidence="1">
    <location>
        <begin position="341"/>
        <end position="344"/>
    </location>
    <ligand>
        <name>GTP</name>
        <dbReference type="ChEBI" id="CHEBI:37565"/>
    </ligand>
</feature>
<feature type="binding site" evidence="1">
    <location>
        <position position="351"/>
    </location>
    <ligand>
        <name>5-phospho-alpha-D-ribose 1-diphosphate</name>
        <dbReference type="ChEBI" id="CHEBI:58017"/>
    </ligand>
</feature>
<feature type="binding site" evidence="1">
    <location>
        <position position="376"/>
    </location>
    <ligand>
        <name>5-phospho-alpha-D-ribose 1-diphosphate</name>
        <dbReference type="ChEBI" id="CHEBI:58017"/>
    </ligand>
</feature>
<feature type="binding site" evidence="1">
    <location>
        <position position="396"/>
    </location>
    <ligand>
        <name>GTP</name>
        <dbReference type="ChEBI" id="CHEBI:37565"/>
    </ligand>
</feature>
<feature type="binding site" evidence="1">
    <location>
        <position position="402"/>
    </location>
    <ligand>
        <name>5-phospho-alpha-D-ribose 1-diphosphate</name>
        <dbReference type="ChEBI" id="CHEBI:58017"/>
    </ligand>
</feature>
<feature type="binding site" evidence="1">
    <location>
        <begin position="407"/>
        <end position="410"/>
    </location>
    <ligand>
        <name>5-phospho-alpha-D-ribose 1-diphosphate</name>
        <dbReference type="ChEBI" id="CHEBI:58017"/>
    </ligand>
</feature>
<feature type="binding site" evidence="1">
    <location>
        <begin position="472"/>
        <end position="474"/>
    </location>
    <ligand>
        <name>uracil</name>
        <dbReference type="ChEBI" id="CHEBI:17568"/>
    </ligand>
</feature>
<feature type="binding site" evidence="1">
    <location>
        <position position="473"/>
    </location>
    <ligand>
        <name>5-phospho-alpha-D-ribose 1-diphosphate</name>
        <dbReference type="ChEBI" id="CHEBI:58017"/>
    </ligand>
</feature>
<evidence type="ECO:0000250" key="1"/>
<evidence type="ECO:0000255" key="2"/>
<evidence type="ECO:0000269" key="3">
    <source>
    </source>
</evidence>
<evidence type="ECO:0000269" key="4">
    <source>
    </source>
</evidence>
<evidence type="ECO:0000269" key="5">
    <source>
    </source>
</evidence>
<evidence type="ECO:0000269" key="6">
    <source>
    </source>
</evidence>
<evidence type="ECO:0000303" key="7">
    <source>
    </source>
</evidence>
<evidence type="ECO:0000303" key="8">
    <source>
    </source>
</evidence>
<evidence type="ECO:0000305" key="9"/>
<evidence type="ECO:0000312" key="10">
    <source>
        <dbReference type="Araport" id="AT3G27190"/>
    </source>
</evidence>
<evidence type="ECO:0000312" key="11">
    <source>
        <dbReference type="EMBL" id="BAB02114.1"/>
    </source>
</evidence>
<keyword id="KW-0021">Allosteric enzyme</keyword>
<keyword id="KW-0150">Chloroplast</keyword>
<keyword id="KW-0328">Glycosyltransferase</keyword>
<keyword id="KW-0342">GTP-binding</keyword>
<keyword id="KW-0418">Kinase</keyword>
<keyword id="KW-0511">Multifunctional enzyme</keyword>
<keyword id="KW-0547">Nucleotide-binding</keyword>
<keyword id="KW-0934">Plastid</keyword>
<keyword id="KW-1185">Reference proteome</keyword>
<keyword id="KW-0808">Transferase</keyword>
<keyword id="KW-0809">Transit peptide</keyword>
<comment type="function">
    <text evidence="3 4 5 6">Involved in the pyrimidine salvage pathway (PubMed:21828290, PubMed:31101721, PubMed:31907295). Phosphorylates uridine to uridine monophosphate (UMP) (PubMed:21828290, PubMed:31101721, PubMed:31907295). Phosphorylates cytidine to cytidine monophosphate (CMP) (PubMed:31101721). Does not possess uracil phosphoribosyltransferase (UPRTase) activity that catalyzes the conversion of uracil and 5-phospho-alpha-D-ribose 1-diphosphate (PRPP) to UMP and diphosphate (PubMed:19563437, PubMed:21828290, PubMed:31101721).</text>
</comment>
<comment type="catalytic activity">
    <reaction evidence="5">
        <text>cytidine + ATP = CMP + ADP + H(+)</text>
        <dbReference type="Rhea" id="RHEA:24674"/>
        <dbReference type="ChEBI" id="CHEBI:15378"/>
        <dbReference type="ChEBI" id="CHEBI:17562"/>
        <dbReference type="ChEBI" id="CHEBI:30616"/>
        <dbReference type="ChEBI" id="CHEBI:60377"/>
        <dbReference type="ChEBI" id="CHEBI:456216"/>
        <dbReference type="EC" id="2.7.1.48"/>
    </reaction>
    <physiologicalReaction direction="left-to-right" evidence="5">
        <dbReference type="Rhea" id="RHEA:24675"/>
    </physiologicalReaction>
</comment>
<comment type="catalytic activity">
    <reaction evidence="4 5 6">
        <text>uridine + ATP = UMP + ADP + H(+)</text>
        <dbReference type="Rhea" id="RHEA:16825"/>
        <dbReference type="ChEBI" id="CHEBI:15378"/>
        <dbReference type="ChEBI" id="CHEBI:16704"/>
        <dbReference type="ChEBI" id="CHEBI:30616"/>
        <dbReference type="ChEBI" id="CHEBI:57865"/>
        <dbReference type="ChEBI" id="CHEBI:456216"/>
        <dbReference type="EC" id="2.7.1.48"/>
    </reaction>
    <physiologicalReaction direction="left-to-right" evidence="4 5 6">
        <dbReference type="Rhea" id="RHEA:16826"/>
    </physiologicalReaction>
</comment>
<comment type="biophysicochemical properties">
    <kinetics>
        <KM evidence="5">0.16 uM for cytidine</KM>
        <KM evidence="4">1.18 uM for uridine</KM>
        <Vmax evidence="5">2.01 umol/h/mg enzyme with cytidine as substrate</Vmax>
        <Vmax evidence="4">243.9 umol/h/mg enzyme with uridine as substrate</Vmax>
    </kinetics>
</comment>
<comment type="pathway">
    <text evidence="9">Pyrimidine metabolism; CTP biosynthesis via salvage pathway; CTP from cytidine: step 1/3.</text>
</comment>
<comment type="pathway">
    <text evidence="9">Pyrimidine metabolism; UMP biosynthesis via salvage pathway; UMP from uridine: step 1/1.</text>
</comment>
<comment type="subcellular location">
    <subcellularLocation>
        <location evidence="4">Plastid</location>
        <location evidence="4">Chloroplast</location>
    </subcellularLocation>
</comment>
<comment type="disruption phenotype">
    <text evidence="3 4">No visible phenotype (PubMed:19563437). No decrease in uracil phosphoribosyltransferase activity (PubMed:19563437). Loss of sensitivity to 5'-fluorouracil and 5'-fluorouridine (PubMed:21828290).</text>
</comment>
<comment type="similarity">
    <text evidence="9">In the N-terminal section; belongs to the uridine kinase family.</text>
</comment>
<comment type="similarity">
    <text evidence="9">In the C-terminal section; belongs to the UPRTase family.</text>
</comment>